<organism>
    <name type="scientific">Arabidopsis thaliana</name>
    <name type="common">Mouse-ear cress</name>
    <dbReference type="NCBI Taxonomy" id="3702"/>
    <lineage>
        <taxon>Eukaryota</taxon>
        <taxon>Viridiplantae</taxon>
        <taxon>Streptophyta</taxon>
        <taxon>Embryophyta</taxon>
        <taxon>Tracheophyta</taxon>
        <taxon>Spermatophyta</taxon>
        <taxon>Magnoliopsida</taxon>
        <taxon>eudicotyledons</taxon>
        <taxon>Gunneridae</taxon>
        <taxon>Pentapetalae</taxon>
        <taxon>rosids</taxon>
        <taxon>malvids</taxon>
        <taxon>Brassicales</taxon>
        <taxon>Brassicaceae</taxon>
        <taxon>Camelineae</taxon>
        <taxon>Arabidopsis</taxon>
    </lineage>
</organism>
<accession>F4HVZ1</accession>
<accession>O23681</accession>
<name>CATB1_ARATH</name>
<keyword id="KW-1015">Disulfide bond</keyword>
<keyword id="KW-0325">Glycoprotein</keyword>
<keyword id="KW-0378">Hydrolase</keyword>
<keyword id="KW-0611">Plant defense</keyword>
<keyword id="KW-0645">Protease</keyword>
<keyword id="KW-1185">Reference proteome</keyword>
<keyword id="KW-0732">Signal</keyword>
<keyword id="KW-0788">Thiol protease</keyword>
<sequence>MADSCCIRLHLLASVFLLLFSSFNLQGIAAENLSKQKLTSLILQNEIVKEVNENPNAGWKAAFNDRFANATVAEFKRLLGVIQTPKTAYLGVPIVRHDLSLKLPKEFDARTAWSHCTSIRRILVGYILNNVLLWSTITLWFWFLLGHCGSCWAFGAVESLSDRFCIKYNLNVSLSANDVIACCGLLCGFGCNGGFPMGAWLYFKYHGVVTQECDPYFDNTGCSHPGCEPTYPTPKCERKCVSRNQLWGESKHYGVGAYRINPDPQDIMAEVYKNGPVEVAFTVYEDFAHYKSGVYKYITGTKIGGHAVKLIGWGTSDDGEDYWLLANQWNRSWGDDGYFKIRRGTNECGIEQSVVAGLPSEKNVFKGITTSDDLLVSSV</sequence>
<evidence type="ECO:0000250" key="1">
    <source>
        <dbReference type="UniProtKB" id="P00785"/>
    </source>
</evidence>
<evidence type="ECO:0000250" key="2">
    <source>
        <dbReference type="UniProtKB" id="P07858"/>
    </source>
</evidence>
<evidence type="ECO:0000250" key="3">
    <source>
        <dbReference type="UniProtKB" id="P80884"/>
    </source>
</evidence>
<evidence type="ECO:0000250" key="4">
    <source>
        <dbReference type="UniProtKB" id="V5LU01"/>
    </source>
</evidence>
<evidence type="ECO:0000255" key="5"/>
<evidence type="ECO:0000255" key="6">
    <source>
        <dbReference type="PROSITE-ProRule" id="PRU00498"/>
    </source>
</evidence>
<evidence type="ECO:0000255" key="7">
    <source>
        <dbReference type="PROSITE-ProRule" id="PRU10088"/>
    </source>
</evidence>
<evidence type="ECO:0000255" key="8">
    <source>
        <dbReference type="PROSITE-ProRule" id="PRU10089"/>
    </source>
</evidence>
<evidence type="ECO:0000255" key="9">
    <source>
        <dbReference type="PROSITE-ProRule" id="PRU10090"/>
    </source>
</evidence>
<evidence type="ECO:0000269" key="10">
    <source>
    </source>
</evidence>
<evidence type="ECO:0000269" key="11">
    <source>
    </source>
</evidence>
<evidence type="ECO:0000303" key="12">
    <source>
    </source>
</evidence>
<evidence type="ECO:0000305" key="13"/>
<evidence type="ECO:0000312" key="14">
    <source>
        <dbReference type="Araport" id="AT1G02300"/>
    </source>
</evidence>
<evidence type="ECO:0000312" key="15">
    <source>
        <dbReference type="EMBL" id="AAC24376.1"/>
    </source>
</evidence>
<feature type="signal peptide" evidence="5">
    <location>
        <begin position="1"/>
        <end position="30"/>
    </location>
</feature>
<feature type="propeptide" id="PRO_0000439416" description="Activation peptide" evidence="1">
    <location>
        <begin position="31"/>
        <end position="102"/>
    </location>
</feature>
<feature type="chain" id="PRO_5009031914" description="Cathepsin B-like protease 1">
    <location>
        <begin position="103"/>
        <end position="362"/>
    </location>
</feature>
<feature type="propeptide" id="PRO_0000439417" description="Removed in mature form" evidence="4">
    <location>
        <begin position="363"/>
        <end position="379"/>
    </location>
</feature>
<feature type="active site" evidence="7">
    <location>
        <position position="151"/>
    </location>
</feature>
<feature type="active site" evidence="8">
    <location>
        <position position="306"/>
    </location>
</feature>
<feature type="active site" evidence="9">
    <location>
        <position position="327"/>
    </location>
</feature>
<feature type="glycosylation site" description="N-linked (GlcNAc...) asparagine" evidence="6">
    <location>
        <position position="32"/>
    </location>
</feature>
<feature type="glycosylation site" description="N-linked (GlcNAc...) asparagine" evidence="6">
    <location>
        <position position="69"/>
    </location>
</feature>
<feature type="glycosylation site" description="N-linked (GlcNAc...) asparagine" evidence="6">
    <location>
        <position position="171"/>
    </location>
</feature>
<feature type="glycosylation site" description="N-linked (GlcNAc...) asparagine" evidence="6">
    <location>
        <position position="330"/>
    </location>
</feature>
<feature type="disulfide bond" evidence="2">
    <location>
        <begin position="116"/>
        <end position="165"/>
    </location>
</feature>
<feature type="disulfide bond" evidence="2">
    <location>
        <begin position="148"/>
        <end position="191"/>
    </location>
</feature>
<feature type="disulfide bond" evidence="2">
    <location>
        <begin position="182"/>
        <end position="236"/>
    </location>
</feature>
<feature type="disulfide bond" evidence="2">
    <location>
        <begin position="183"/>
        <end position="187"/>
    </location>
</feature>
<feature type="disulfide bond" evidence="2">
    <location>
        <begin position="213"/>
        <end position="240"/>
    </location>
</feature>
<feature type="disulfide bond" evidence="2">
    <location>
        <begin position="222"/>
        <end position="227"/>
    </location>
</feature>
<gene>
    <name evidence="12" type="primary">CATHB1</name>
    <name evidence="14" type="ordered locus">At1g02300</name>
    <name evidence="15" type="ORF">T7I23.12</name>
</gene>
<reference key="1">
    <citation type="journal article" date="2000" name="Nature">
        <title>Sequence and analysis of chromosome 1 of the plant Arabidopsis thaliana.</title>
        <authorList>
            <person name="Theologis A."/>
            <person name="Ecker J.R."/>
            <person name="Palm C.J."/>
            <person name="Federspiel N.A."/>
            <person name="Kaul S."/>
            <person name="White O."/>
            <person name="Alonso J."/>
            <person name="Altafi H."/>
            <person name="Araujo R."/>
            <person name="Bowman C.L."/>
            <person name="Brooks S.Y."/>
            <person name="Buehler E."/>
            <person name="Chan A."/>
            <person name="Chao Q."/>
            <person name="Chen H."/>
            <person name="Cheuk R.F."/>
            <person name="Chin C.W."/>
            <person name="Chung M.K."/>
            <person name="Conn L."/>
            <person name="Conway A.B."/>
            <person name="Conway A.R."/>
            <person name="Creasy T.H."/>
            <person name="Dewar K."/>
            <person name="Dunn P."/>
            <person name="Etgu P."/>
            <person name="Feldblyum T.V."/>
            <person name="Feng J.-D."/>
            <person name="Fong B."/>
            <person name="Fujii C.Y."/>
            <person name="Gill J.E."/>
            <person name="Goldsmith A.D."/>
            <person name="Haas B."/>
            <person name="Hansen N.F."/>
            <person name="Hughes B."/>
            <person name="Huizar L."/>
            <person name="Hunter J.L."/>
            <person name="Jenkins J."/>
            <person name="Johnson-Hopson C."/>
            <person name="Khan S."/>
            <person name="Khaykin E."/>
            <person name="Kim C.J."/>
            <person name="Koo H.L."/>
            <person name="Kremenetskaia I."/>
            <person name="Kurtz D.B."/>
            <person name="Kwan A."/>
            <person name="Lam B."/>
            <person name="Langin-Hooper S."/>
            <person name="Lee A."/>
            <person name="Lee J.M."/>
            <person name="Lenz C.A."/>
            <person name="Li J.H."/>
            <person name="Li Y.-P."/>
            <person name="Lin X."/>
            <person name="Liu S.X."/>
            <person name="Liu Z.A."/>
            <person name="Luros J.S."/>
            <person name="Maiti R."/>
            <person name="Marziali A."/>
            <person name="Militscher J."/>
            <person name="Miranda M."/>
            <person name="Nguyen M."/>
            <person name="Nierman W.C."/>
            <person name="Osborne B.I."/>
            <person name="Pai G."/>
            <person name="Peterson J."/>
            <person name="Pham P.K."/>
            <person name="Rizzo M."/>
            <person name="Rooney T."/>
            <person name="Rowley D."/>
            <person name="Sakano H."/>
            <person name="Salzberg S.L."/>
            <person name="Schwartz J.R."/>
            <person name="Shinn P."/>
            <person name="Southwick A.M."/>
            <person name="Sun H."/>
            <person name="Tallon L.J."/>
            <person name="Tambunga G."/>
            <person name="Toriumi M.J."/>
            <person name="Town C.D."/>
            <person name="Utterback T."/>
            <person name="Van Aken S."/>
            <person name="Vaysberg M."/>
            <person name="Vysotskaia V.S."/>
            <person name="Walker M."/>
            <person name="Wu D."/>
            <person name="Yu G."/>
            <person name="Fraser C.M."/>
            <person name="Venter J.C."/>
            <person name="Davis R.W."/>
        </authorList>
    </citation>
    <scope>NUCLEOTIDE SEQUENCE [LARGE SCALE GENOMIC DNA]</scope>
    <source>
        <strain>cv. Columbia</strain>
    </source>
</reference>
<reference key="2">
    <citation type="journal article" date="2017" name="Plant J.">
        <title>Araport11: a complete reannotation of the Arabidopsis thaliana reference genome.</title>
        <authorList>
            <person name="Cheng C.Y."/>
            <person name="Krishnakumar V."/>
            <person name="Chan A.P."/>
            <person name="Thibaud-Nissen F."/>
            <person name="Schobel S."/>
            <person name="Town C.D."/>
        </authorList>
    </citation>
    <scope>GENOME REANNOTATION</scope>
    <source>
        <strain>cv. Columbia</strain>
    </source>
</reference>
<reference key="3">
    <citation type="journal article" date="2009" name="New Phytol.">
        <title>Functional redundancy in the Arabidopsis cathepsin B gene family contributes to basal defence, the hypersensitive response and senescence.</title>
        <authorList>
            <person name="McLellan H."/>
            <person name="Gilroy E.M."/>
            <person name="Yun B.W."/>
            <person name="Birch P.R."/>
            <person name="Loake G.J."/>
        </authorList>
    </citation>
    <scope>FUNCTION</scope>
    <scope>INDUCTION</scope>
</reference>
<reference key="4">
    <citation type="journal article" date="2016" name="Cell Death Differ.">
        <title>Inhibition of cathepsin B by caspase-3 inhibitors blocks programmed cell death in Arabidopsis.</title>
        <authorList>
            <person name="Ge Y."/>
            <person name="Cai Y.M."/>
            <person name="Bonneau L."/>
            <person name="Rotari V."/>
            <person name="Danon A."/>
            <person name="McKenzie E.A."/>
            <person name="McLellan H."/>
            <person name="Mach L."/>
            <person name="Gallois P."/>
        </authorList>
    </citation>
    <scope>FUNCTION</scope>
</reference>
<comment type="function">
    <text evidence="10 11">Thiol protease that plays a central role in plant programmed cell death (PCD). In addition to its role in protein degradation, may cleave and/or degrade a number of target proteins, activating signaling towards PCD. Contributes to the increase of caspase-3-like activity after UV-C-induced PCD and is required for abiotic stress-induced PCD (PubMed:27058316). Functions redundantly with CATHB2 and CATHB3 in basal defense and distinct forms of plant programmed cell death (PCD). Participates in the establishment of basal resistance against the bacterial pathogen Pseudomonase syringae pv. tomato DC3000. Required for full levels of PCD during resistance (R) gene-mediated hypersensitive response (HR). Involved in the regulation of senescence, a developmental form of PCD in plants (PubMed:19453434).</text>
</comment>
<comment type="induction">
    <text evidence="10">By dark-induced senescence. Down-regulated by infection with an avirulent strain of the bacterial pathogen Pseudomonase syringae pv. tomato DC3000.</text>
</comment>
<comment type="similarity">
    <text evidence="8">Belongs to the peptidase C1 family.</text>
</comment>
<comment type="sequence caution" evidence="13">
    <conflict type="erroneous gene model prediction">
        <sequence resource="EMBL-CDS" id="AAC24376"/>
    </conflict>
</comment>
<proteinExistence type="evidence at transcript level"/>
<dbReference type="EC" id="3.4.22.-" evidence="3"/>
<dbReference type="EMBL" id="U89959">
    <property type="protein sequence ID" value="AAC24376.1"/>
    <property type="status" value="ALT_SEQ"/>
    <property type="molecule type" value="Genomic_DNA"/>
</dbReference>
<dbReference type="EMBL" id="CP002684">
    <property type="protein sequence ID" value="AEE27412.1"/>
    <property type="molecule type" value="Genomic_DNA"/>
</dbReference>
<dbReference type="RefSeq" id="NP_563647.1">
    <property type="nucleotide sequence ID" value="NM_100110.3"/>
</dbReference>
<dbReference type="SMR" id="F4HVZ1"/>
<dbReference type="FunCoup" id="F4HVZ1">
    <property type="interactions" value="1374"/>
</dbReference>
<dbReference type="STRING" id="3702.F4HVZ1"/>
<dbReference type="GlyCosmos" id="F4HVZ1">
    <property type="glycosylation" value="4 sites, No reported glycans"/>
</dbReference>
<dbReference type="GlyGen" id="F4HVZ1">
    <property type="glycosylation" value="4 sites"/>
</dbReference>
<dbReference type="iPTMnet" id="F4HVZ1"/>
<dbReference type="PaxDb" id="3702-AT1G02300.1"/>
<dbReference type="ProteomicsDB" id="223924"/>
<dbReference type="EnsemblPlants" id="AT1G02300.1">
    <property type="protein sequence ID" value="AT1G02300.1"/>
    <property type="gene ID" value="AT1G02300"/>
</dbReference>
<dbReference type="GeneID" id="839576"/>
<dbReference type="Gramene" id="AT1G02300.1">
    <property type="protein sequence ID" value="AT1G02300.1"/>
    <property type="gene ID" value="AT1G02300"/>
</dbReference>
<dbReference type="KEGG" id="ath:AT1G02300"/>
<dbReference type="Araport" id="AT1G02300"/>
<dbReference type="TAIR" id="AT1G02300">
    <property type="gene designation" value="ATCATHB1"/>
</dbReference>
<dbReference type="eggNOG" id="KOG1543">
    <property type="taxonomic scope" value="Eukaryota"/>
</dbReference>
<dbReference type="HOGENOM" id="CLU_012184_3_0_1"/>
<dbReference type="InParanoid" id="F4HVZ1"/>
<dbReference type="OMA" id="EYRVFEM"/>
<dbReference type="PRO" id="PR:F4HVZ1"/>
<dbReference type="Proteomes" id="UP000006548">
    <property type="component" value="Chromosome 1"/>
</dbReference>
<dbReference type="ExpressionAtlas" id="F4HVZ1">
    <property type="expression patterns" value="baseline and differential"/>
</dbReference>
<dbReference type="GO" id="GO:0004197">
    <property type="term" value="F:cysteine-type endopeptidase activity"/>
    <property type="evidence" value="ECO:0000314"/>
    <property type="project" value="TAIR"/>
</dbReference>
<dbReference type="GO" id="GO:0006952">
    <property type="term" value="P:defense response"/>
    <property type="evidence" value="ECO:0007669"/>
    <property type="project" value="UniProtKB-KW"/>
</dbReference>
<dbReference type="GO" id="GO:0006508">
    <property type="term" value="P:proteolysis"/>
    <property type="evidence" value="ECO:0007669"/>
    <property type="project" value="UniProtKB-KW"/>
</dbReference>
<dbReference type="CDD" id="cd02620">
    <property type="entry name" value="Peptidase_C1A_CathepsinB"/>
    <property type="match status" value="1"/>
</dbReference>
<dbReference type="FunFam" id="3.90.70.10:FF:000081">
    <property type="entry name" value="cathepsin B-like protease 2"/>
    <property type="match status" value="1"/>
</dbReference>
<dbReference type="Gene3D" id="3.90.70.10">
    <property type="entry name" value="Cysteine proteinases"/>
    <property type="match status" value="1"/>
</dbReference>
<dbReference type="InterPro" id="IPR038765">
    <property type="entry name" value="Papain-like_cys_pep_sf"/>
</dbReference>
<dbReference type="InterPro" id="IPR025660">
    <property type="entry name" value="Pept_his_AS"/>
</dbReference>
<dbReference type="InterPro" id="IPR013128">
    <property type="entry name" value="Peptidase_C1A"/>
</dbReference>
<dbReference type="InterPro" id="IPR000668">
    <property type="entry name" value="Peptidase_C1A_C"/>
</dbReference>
<dbReference type="InterPro" id="IPR012599">
    <property type="entry name" value="Propeptide_C1A"/>
</dbReference>
<dbReference type="PANTHER" id="PTHR12411">
    <property type="entry name" value="CYSTEINE PROTEASE FAMILY C1-RELATED"/>
    <property type="match status" value="1"/>
</dbReference>
<dbReference type="Pfam" id="PF00112">
    <property type="entry name" value="Peptidase_C1"/>
    <property type="match status" value="1"/>
</dbReference>
<dbReference type="Pfam" id="PF08127">
    <property type="entry name" value="Propeptide_C1"/>
    <property type="match status" value="1"/>
</dbReference>
<dbReference type="PRINTS" id="PR00705">
    <property type="entry name" value="PAPAIN"/>
</dbReference>
<dbReference type="SMART" id="SM00645">
    <property type="entry name" value="Pept_C1"/>
    <property type="match status" value="1"/>
</dbReference>
<dbReference type="SUPFAM" id="SSF54001">
    <property type="entry name" value="Cysteine proteinases"/>
    <property type="match status" value="1"/>
</dbReference>
<dbReference type="PROSITE" id="PS00639">
    <property type="entry name" value="THIOL_PROTEASE_HIS"/>
    <property type="match status" value="1"/>
</dbReference>
<protein>
    <recommendedName>
        <fullName evidence="13">Cathepsin B-like protease 1</fullName>
        <ecNumber evidence="3">3.4.22.-</ecNumber>
    </recommendedName>
    <alternativeName>
        <fullName evidence="13">Cathepsin B1</fullName>
        <shortName evidence="12">AtCathB1</shortName>
    </alternativeName>
</protein>